<reference key="1">
    <citation type="journal article" date="2005" name="Nature">
        <title>The genome of the social amoeba Dictyostelium discoideum.</title>
        <authorList>
            <person name="Eichinger L."/>
            <person name="Pachebat J.A."/>
            <person name="Gloeckner G."/>
            <person name="Rajandream M.A."/>
            <person name="Sucgang R."/>
            <person name="Berriman M."/>
            <person name="Song J."/>
            <person name="Olsen R."/>
            <person name="Szafranski K."/>
            <person name="Xu Q."/>
            <person name="Tunggal B."/>
            <person name="Kummerfeld S."/>
            <person name="Madera M."/>
            <person name="Konfortov B.A."/>
            <person name="Rivero F."/>
            <person name="Bankier A.T."/>
            <person name="Lehmann R."/>
            <person name="Hamlin N."/>
            <person name="Davies R."/>
            <person name="Gaudet P."/>
            <person name="Fey P."/>
            <person name="Pilcher K."/>
            <person name="Chen G."/>
            <person name="Saunders D."/>
            <person name="Sodergren E.J."/>
            <person name="Davis P."/>
            <person name="Kerhornou A."/>
            <person name="Nie X."/>
            <person name="Hall N."/>
            <person name="Anjard C."/>
            <person name="Hemphill L."/>
            <person name="Bason N."/>
            <person name="Farbrother P."/>
            <person name="Desany B."/>
            <person name="Just E."/>
            <person name="Morio T."/>
            <person name="Rost R."/>
            <person name="Churcher C.M."/>
            <person name="Cooper J."/>
            <person name="Haydock S."/>
            <person name="van Driessche N."/>
            <person name="Cronin A."/>
            <person name="Goodhead I."/>
            <person name="Muzny D.M."/>
            <person name="Mourier T."/>
            <person name="Pain A."/>
            <person name="Lu M."/>
            <person name="Harper D."/>
            <person name="Lindsay R."/>
            <person name="Hauser H."/>
            <person name="James K.D."/>
            <person name="Quiles M."/>
            <person name="Madan Babu M."/>
            <person name="Saito T."/>
            <person name="Buchrieser C."/>
            <person name="Wardroper A."/>
            <person name="Felder M."/>
            <person name="Thangavelu M."/>
            <person name="Johnson D."/>
            <person name="Knights A."/>
            <person name="Loulseged H."/>
            <person name="Mungall K.L."/>
            <person name="Oliver K."/>
            <person name="Price C."/>
            <person name="Quail M.A."/>
            <person name="Urushihara H."/>
            <person name="Hernandez J."/>
            <person name="Rabbinowitsch E."/>
            <person name="Steffen D."/>
            <person name="Sanders M."/>
            <person name="Ma J."/>
            <person name="Kohara Y."/>
            <person name="Sharp S."/>
            <person name="Simmonds M.N."/>
            <person name="Spiegler S."/>
            <person name="Tivey A."/>
            <person name="Sugano S."/>
            <person name="White B."/>
            <person name="Walker D."/>
            <person name="Woodward J.R."/>
            <person name="Winckler T."/>
            <person name="Tanaka Y."/>
            <person name="Shaulsky G."/>
            <person name="Schleicher M."/>
            <person name="Weinstock G.M."/>
            <person name="Rosenthal A."/>
            <person name="Cox E.C."/>
            <person name="Chisholm R.L."/>
            <person name="Gibbs R.A."/>
            <person name="Loomis W.F."/>
            <person name="Platzer M."/>
            <person name="Kay R.R."/>
            <person name="Williams J.G."/>
            <person name="Dear P.H."/>
            <person name="Noegel A.A."/>
            <person name="Barrell B.G."/>
            <person name="Kuspa A."/>
        </authorList>
    </citation>
    <scope>NUCLEOTIDE SEQUENCE [LARGE SCALE GENOMIC DNA]</scope>
    <source>
        <strain>AX4</strain>
    </source>
</reference>
<keyword id="KW-0963">Cytoplasm</keyword>
<keyword id="KW-0968">Cytoplasmic vesicle</keyword>
<keyword id="KW-0931">ER-Golgi transport</keyword>
<keyword id="KW-0333">Golgi apparatus</keyword>
<keyword id="KW-0472">Membrane</keyword>
<keyword id="KW-0653">Protein transport</keyword>
<keyword id="KW-1185">Reference proteome</keyword>
<keyword id="KW-0813">Transport</keyword>
<gene>
    <name type="primary">cope</name>
    <name type="ORF">DDB_G0267950</name>
</gene>
<accession>Q55FU2</accession>
<dbReference type="EMBL" id="AAFI02000003">
    <property type="protein sequence ID" value="EAL73428.1"/>
    <property type="molecule type" value="Genomic_DNA"/>
</dbReference>
<dbReference type="RefSeq" id="XP_647441.1">
    <property type="nucleotide sequence ID" value="XM_642349.1"/>
</dbReference>
<dbReference type="SMR" id="Q55FU2"/>
<dbReference type="FunCoup" id="Q55FU2">
    <property type="interactions" value="702"/>
</dbReference>
<dbReference type="STRING" id="44689.Q55FU2"/>
<dbReference type="GlyGen" id="Q55FU2">
    <property type="glycosylation" value="1 site"/>
</dbReference>
<dbReference type="PaxDb" id="44689-DDB0233799"/>
<dbReference type="EnsemblProtists" id="EAL73428">
    <property type="protein sequence ID" value="EAL73428"/>
    <property type="gene ID" value="DDB_G0267950"/>
</dbReference>
<dbReference type="GeneID" id="8616248"/>
<dbReference type="KEGG" id="ddi:DDB_G0267950"/>
<dbReference type="dictyBase" id="DDB_G0267950">
    <property type="gene designation" value="copE"/>
</dbReference>
<dbReference type="VEuPathDB" id="AmoebaDB:DDB_G0267950"/>
<dbReference type="eggNOG" id="KOG3081">
    <property type="taxonomic scope" value="Eukaryota"/>
</dbReference>
<dbReference type="HOGENOM" id="CLU_049363_0_0_1"/>
<dbReference type="InParanoid" id="Q55FU2"/>
<dbReference type="OMA" id="MIVLSQH"/>
<dbReference type="PhylomeDB" id="Q55FU2"/>
<dbReference type="Reactome" id="R-DDI-6807878">
    <property type="pathway name" value="COPI-mediated anterograde transport"/>
</dbReference>
<dbReference type="Reactome" id="R-DDI-6811434">
    <property type="pathway name" value="COPI-dependent Golgi-to-ER retrograde traffic"/>
</dbReference>
<dbReference type="PRO" id="PR:Q55FU2"/>
<dbReference type="Proteomes" id="UP000002195">
    <property type="component" value="Chromosome 1"/>
</dbReference>
<dbReference type="GO" id="GO:0030126">
    <property type="term" value="C:COPI vesicle coat"/>
    <property type="evidence" value="ECO:0000250"/>
    <property type="project" value="UniProtKB"/>
</dbReference>
<dbReference type="GO" id="GO:0000139">
    <property type="term" value="C:Golgi membrane"/>
    <property type="evidence" value="ECO:0007669"/>
    <property type="project" value="UniProtKB-SubCell"/>
</dbReference>
<dbReference type="GO" id="GO:0005198">
    <property type="term" value="F:structural molecule activity"/>
    <property type="evidence" value="ECO:0007669"/>
    <property type="project" value="InterPro"/>
</dbReference>
<dbReference type="GO" id="GO:0006888">
    <property type="term" value="P:endoplasmic reticulum to Golgi vesicle-mediated transport"/>
    <property type="evidence" value="ECO:0000318"/>
    <property type="project" value="GO_Central"/>
</dbReference>
<dbReference type="GO" id="GO:0006891">
    <property type="term" value="P:intra-Golgi vesicle-mediated transport"/>
    <property type="evidence" value="ECO:0000250"/>
    <property type="project" value="UniProtKB"/>
</dbReference>
<dbReference type="GO" id="GO:0015031">
    <property type="term" value="P:protein transport"/>
    <property type="evidence" value="ECO:0007669"/>
    <property type="project" value="UniProtKB-KW"/>
</dbReference>
<dbReference type="GO" id="GO:0006890">
    <property type="term" value="P:retrograde vesicle-mediated transport, Golgi to endoplasmic reticulum"/>
    <property type="evidence" value="ECO:0007669"/>
    <property type="project" value="InterPro"/>
</dbReference>
<dbReference type="FunFam" id="1.25.40.10:FF:002649">
    <property type="entry name" value="Coatomer subunit epsilon"/>
    <property type="match status" value="1"/>
</dbReference>
<dbReference type="Gene3D" id="1.25.40.10">
    <property type="entry name" value="Tetratricopeptide repeat domain"/>
    <property type="match status" value="1"/>
</dbReference>
<dbReference type="InterPro" id="IPR006822">
    <property type="entry name" value="Coatomer_esu"/>
</dbReference>
<dbReference type="InterPro" id="IPR011990">
    <property type="entry name" value="TPR-like_helical_dom_sf"/>
</dbReference>
<dbReference type="PANTHER" id="PTHR10805">
    <property type="entry name" value="COATOMER SUBUNIT EPSILON"/>
    <property type="match status" value="1"/>
</dbReference>
<dbReference type="PANTHER" id="PTHR10805:SF0">
    <property type="entry name" value="COATOMER SUBUNIT EPSILON"/>
    <property type="match status" value="1"/>
</dbReference>
<dbReference type="Pfam" id="PF04733">
    <property type="entry name" value="Coatomer_E"/>
    <property type="match status" value="1"/>
</dbReference>
<dbReference type="PIRSF" id="PIRSF016478">
    <property type="entry name" value="Coatomer_esu"/>
    <property type="match status" value="1"/>
</dbReference>
<dbReference type="SUPFAM" id="SSF48452">
    <property type="entry name" value="TPR-like"/>
    <property type="match status" value="1"/>
</dbReference>
<feature type="chain" id="PRO_0000327499" description="Coatomer subunit epsilon">
    <location>
        <begin position="1"/>
        <end position="300"/>
    </location>
</feature>
<protein>
    <recommendedName>
        <fullName>Coatomer subunit epsilon</fullName>
    </recommendedName>
    <alternativeName>
        <fullName>Epsilon-coat protein</fullName>
        <shortName>Epsilon-COP</shortName>
    </alternativeName>
</protein>
<sequence>MSDDILFESKNYFYLGNYQSTINEINKKSRQIIEKSLKAESDYFLYRCYIAQGNYDLVLQETKNNRGSGEDPTIAGLQLLASYLSKPDENREGTLITITQWISDGVVKFNYHLQVIIATIYFNEQLYDEALQILNNCDHIEGLSMLIQIFLKIDRLDLAQKAYDTMKKIIDPDATPALLSLAWINIYNGEEKLKSALSSFEEMAERYGPTPLLLNGQAVCAIGMKRFEKAESLLLESIEKNPKNSDTLANLINCYINMKKPNEIIQRFINQLKTLSPKHDWTSAVNEAEALFEVSKSRFN</sequence>
<proteinExistence type="inferred from homology"/>
<comment type="function">
    <text evidence="1">The coatomer is a cytosolic protein complex that binds to dilysine motifs and reversibly associates with Golgi non-clathrin-coated vesicles, which further mediate biosynthetic protein transport from the ER, via the Golgi up to the trans Golgi network. The coatomer complex is required for budding from Golgi membranes, and is essential for the retrograde Golgi-to-ER transport of dilysine-tagged proteins (By similarity).</text>
</comment>
<comment type="subunit">
    <text evidence="1">Oligomeric complex that consists of at least the alpha, beta, beta', gamma, delta, epsilon and zeta subunits.</text>
</comment>
<comment type="subcellular location">
    <subcellularLocation>
        <location evidence="1">Cytoplasm</location>
    </subcellularLocation>
    <subcellularLocation>
        <location evidence="1">Golgi apparatus membrane</location>
        <topology evidence="1">Peripheral membrane protein</topology>
        <orientation evidence="1">Cytoplasmic side</orientation>
    </subcellularLocation>
    <subcellularLocation>
        <location evidence="1">Cytoplasmic vesicle</location>
        <location evidence="1">COPI-coated vesicle membrane</location>
        <topology evidence="1">Peripheral membrane protein</topology>
        <orientation evidence="1">Cytoplasmic side</orientation>
    </subcellularLocation>
</comment>
<comment type="similarity">
    <text evidence="2">Belongs to the COPE family.</text>
</comment>
<name>COPE_DICDI</name>
<evidence type="ECO:0000250" key="1"/>
<evidence type="ECO:0000305" key="2"/>
<organism>
    <name type="scientific">Dictyostelium discoideum</name>
    <name type="common">Social amoeba</name>
    <dbReference type="NCBI Taxonomy" id="44689"/>
    <lineage>
        <taxon>Eukaryota</taxon>
        <taxon>Amoebozoa</taxon>
        <taxon>Evosea</taxon>
        <taxon>Eumycetozoa</taxon>
        <taxon>Dictyostelia</taxon>
        <taxon>Dictyosteliales</taxon>
        <taxon>Dictyosteliaceae</taxon>
        <taxon>Dictyostelium</taxon>
    </lineage>
</organism>